<reference key="1">
    <citation type="submission" date="2008-02" db="EMBL/GenBank/DDBJ databases">
        <title>Genome sequence of Ureaplasma parvum serovar 3.</title>
        <authorList>
            <person name="Methe B.A."/>
            <person name="Glass J."/>
            <person name="Waites K."/>
            <person name="Shrivastava S."/>
        </authorList>
    </citation>
    <scope>NUCLEOTIDE SEQUENCE [LARGE SCALE GENOMIC DNA]</scope>
    <source>
        <strain>ATCC 27815 / 27 / NCTC 11736</strain>
    </source>
</reference>
<protein>
    <recommendedName>
        <fullName evidence="1">Phosphatidylglycerol--prolipoprotein diacylglyceryl transferase</fullName>
        <ecNumber evidence="1">2.5.1.145</ecNumber>
    </recommendedName>
</protein>
<dbReference type="EC" id="2.5.1.145" evidence="1"/>
<dbReference type="EMBL" id="CP000942">
    <property type="protein sequence ID" value="ACA33249.1"/>
    <property type="molecule type" value="Genomic_DNA"/>
</dbReference>
<dbReference type="RefSeq" id="WP_006688652.1">
    <property type="nucleotide sequence ID" value="NC_010503.1"/>
</dbReference>
<dbReference type="SMR" id="B1AI60"/>
<dbReference type="GeneID" id="29672166"/>
<dbReference type="KEGG" id="upa:UPA3_0074"/>
<dbReference type="HOGENOM" id="CLU_013386_0_2_14"/>
<dbReference type="UniPathway" id="UPA00664"/>
<dbReference type="Proteomes" id="UP000002162">
    <property type="component" value="Chromosome"/>
</dbReference>
<dbReference type="GO" id="GO:0005886">
    <property type="term" value="C:plasma membrane"/>
    <property type="evidence" value="ECO:0007669"/>
    <property type="project" value="UniProtKB-SubCell"/>
</dbReference>
<dbReference type="GO" id="GO:0008961">
    <property type="term" value="F:phosphatidylglycerol-prolipoprotein diacylglyceryl transferase activity"/>
    <property type="evidence" value="ECO:0007669"/>
    <property type="project" value="UniProtKB-UniRule"/>
</dbReference>
<dbReference type="GO" id="GO:0042158">
    <property type="term" value="P:lipoprotein biosynthetic process"/>
    <property type="evidence" value="ECO:0007669"/>
    <property type="project" value="UniProtKB-UniRule"/>
</dbReference>
<dbReference type="HAMAP" id="MF_01147">
    <property type="entry name" value="Lgt"/>
    <property type="match status" value="1"/>
</dbReference>
<dbReference type="InterPro" id="IPR001640">
    <property type="entry name" value="Lgt"/>
</dbReference>
<dbReference type="NCBIfam" id="TIGR00544">
    <property type="entry name" value="lgt"/>
    <property type="match status" value="1"/>
</dbReference>
<dbReference type="PANTHER" id="PTHR30589:SF0">
    <property type="entry name" value="PHOSPHATIDYLGLYCEROL--PROLIPOPROTEIN DIACYLGLYCERYL TRANSFERASE"/>
    <property type="match status" value="1"/>
</dbReference>
<dbReference type="PANTHER" id="PTHR30589">
    <property type="entry name" value="PROLIPOPROTEIN DIACYLGLYCERYL TRANSFERASE"/>
    <property type="match status" value="1"/>
</dbReference>
<dbReference type="Pfam" id="PF01790">
    <property type="entry name" value="LGT"/>
    <property type="match status" value="1"/>
</dbReference>
<dbReference type="PROSITE" id="PS01311">
    <property type="entry name" value="LGT"/>
    <property type="match status" value="1"/>
</dbReference>
<organism>
    <name type="scientific">Ureaplasma parvum serovar 3 (strain ATCC 27815 / 27 / NCTC 11736)</name>
    <dbReference type="NCBI Taxonomy" id="505682"/>
    <lineage>
        <taxon>Bacteria</taxon>
        <taxon>Bacillati</taxon>
        <taxon>Mycoplasmatota</taxon>
        <taxon>Mycoplasmoidales</taxon>
        <taxon>Mycoplasmoidaceae</taxon>
        <taxon>Ureaplasma</taxon>
    </lineage>
</organism>
<gene>
    <name evidence="1" type="primary">lgt</name>
    <name type="ordered locus">UPA3_0074</name>
</gene>
<keyword id="KW-1003">Cell membrane</keyword>
<keyword id="KW-0472">Membrane</keyword>
<keyword id="KW-0808">Transferase</keyword>
<keyword id="KW-0812">Transmembrane</keyword>
<keyword id="KW-1133">Transmembrane helix</keyword>
<proteinExistence type="inferred from homology"/>
<feature type="chain" id="PRO_1000085089" description="Phosphatidylglycerol--prolipoprotein diacylglyceryl transferase">
    <location>
        <begin position="1"/>
        <end position="335"/>
    </location>
</feature>
<feature type="transmembrane region" description="Helical" evidence="1">
    <location>
        <begin position="31"/>
        <end position="51"/>
    </location>
</feature>
<feature type="transmembrane region" description="Helical" evidence="1">
    <location>
        <begin position="67"/>
        <end position="87"/>
    </location>
</feature>
<feature type="transmembrane region" description="Helical" evidence="1">
    <location>
        <begin position="100"/>
        <end position="120"/>
    </location>
</feature>
<feature type="transmembrane region" description="Helical" evidence="1">
    <location>
        <begin position="213"/>
        <end position="233"/>
    </location>
</feature>
<feature type="transmembrane region" description="Helical" evidence="1">
    <location>
        <begin position="235"/>
        <end position="255"/>
    </location>
</feature>
<feature type="transmembrane region" description="Helical" evidence="1">
    <location>
        <begin position="277"/>
        <end position="297"/>
    </location>
</feature>
<feature type="binding site" evidence="1">
    <location>
        <position position="163"/>
    </location>
    <ligand>
        <name>a 1,2-diacyl-sn-glycero-3-phospho-(1'-sn-glycerol)</name>
        <dbReference type="ChEBI" id="CHEBI:64716"/>
    </ligand>
</feature>
<accession>B1AI60</accession>
<sequence>MQLEIINPESTLVNDVVAHRVAFSIGSNFNIYWYGIIFVCGFLIAILTYSLRLKFHYKVPYDPGFYYIFLAIPMTIIGARLWSLAIGDAKDFFDFRSGGLAIQGGVIAGVLSAAVYFPLILRMPKYHIRDIDADGNVVIRQPSMWIYADAIIPTILIGQALGRWGNFINGEIFGAESTVNDLQWLKKAMPAVFEGMKHYFIEGNKTLFTIYQPLFLYESFFNVIVFVFIYFGLSYIKQLKIGFISMSYFFFYGVTRFSTESARAPQFSFEGTYIINSLLLIFGVLGALYVQFIAPLLRKKFLLDAIIEMFYKKKDQIHKFGELRKPEEFLFYCHK</sequence>
<evidence type="ECO:0000255" key="1">
    <source>
        <dbReference type="HAMAP-Rule" id="MF_01147"/>
    </source>
</evidence>
<comment type="function">
    <text evidence="1">Catalyzes the transfer of the diacylglyceryl group from phosphatidylglycerol to the sulfhydryl group of the N-terminal cysteine of a prolipoprotein, the first step in the formation of mature lipoproteins.</text>
</comment>
<comment type="catalytic activity">
    <reaction evidence="1">
        <text>L-cysteinyl-[prolipoprotein] + a 1,2-diacyl-sn-glycero-3-phospho-(1'-sn-glycerol) = an S-1,2-diacyl-sn-glyceryl-L-cysteinyl-[prolipoprotein] + sn-glycerol 1-phosphate + H(+)</text>
        <dbReference type="Rhea" id="RHEA:56712"/>
        <dbReference type="Rhea" id="RHEA-COMP:14679"/>
        <dbReference type="Rhea" id="RHEA-COMP:14680"/>
        <dbReference type="ChEBI" id="CHEBI:15378"/>
        <dbReference type="ChEBI" id="CHEBI:29950"/>
        <dbReference type="ChEBI" id="CHEBI:57685"/>
        <dbReference type="ChEBI" id="CHEBI:64716"/>
        <dbReference type="ChEBI" id="CHEBI:140658"/>
        <dbReference type="EC" id="2.5.1.145"/>
    </reaction>
</comment>
<comment type="pathway">
    <text evidence="1">Protein modification; lipoprotein biosynthesis (diacylglyceryl transfer).</text>
</comment>
<comment type="subcellular location">
    <subcellularLocation>
        <location evidence="1">Cell membrane</location>
        <topology evidence="1">Multi-pass membrane protein</topology>
    </subcellularLocation>
</comment>
<comment type="similarity">
    <text evidence="1">Belongs to the Lgt family.</text>
</comment>
<name>LGT_UREP2</name>